<proteinExistence type="inferred from homology"/>
<reference key="1">
    <citation type="journal article" date="2000" name="Science">
        <title>Complete genome sequence of Neisseria meningitidis serogroup B strain MC58.</title>
        <authorList>
            <person name="Tettelin H."/>
            <person name="Saunders N.J."/>
            <person name="Heidelberg J.F."/>
            <person name="Jeffries A.C."/>
            <person name="Nelson K.E."/>
            <person name="Eisen J.A."/>
            <person name="Ketchum K.A."/>
            <person name="Hood D.W."/>
            <person name="Peden J.F."/>
            <person name="Dodson R.J."/>
            <person name="Nelson W.C."/>
            <person name="Gwinn M.L."/>
            <person name="DeBoy R.T."/>
            <person name="Peterson J.D."/>
            <person name="Hickey E.K."/>
            <person name="Haft D.H."/>
            <person name="Salzberg S.L."/>
            <person name="White O."/>
            <person name="Fleischmann R.D."/>
            <person name="Dougherty B.A."/>
            <person name="Mason T.M."/>
            <person name="Ciecko A."/>
            <person name="Parksey D.S."/>
            <person name="Blair E."/>
            <person name="Cittone H."/>
            <person name="Clark E.B."/>
            <person name="Cotton M.D."/>
            <person name="Utterback T.R."/>
            <person name="Khouri H.M."/>
            <person name="Qin H."/>
            <person name="Vamathevan J.J."/>
            <person name="Gill J."/>
            <person name="Scarlato V."/>
            <person name="Masignani V."/>
            <person name="Pizza M."/>
            <person name="Grandi G."/>
            <person name="Sun L."/>
            <person name="Smith H.O."/>
            <person name="Fraser C.M."/>
            <person name="Moxon E.R."/>
            <person name="Rappuoli R."/>
            <person name="Venter J.C."/>
        </authorList>
    </citation>
    <scope>NUCLEOTIDE SEQUENCE [LARGE SCALE GENOMIC DNA]</scope>
    <source>
        <strain>ATCC BAA-335 / MC58</strain>
    </source>
</reference>
<gene>
    <name evidence="1" type="primary">glnE</name>
    <name type="ordered locus">NMB0224</name>
</gene>
<accession>Q9K1D5</accession>
<organism>
    <name type="scientific">Neisseria meningitidis serogroup B (strain ATCC BAA-335 / MC58)</name>
    <dbReference type="NCBI Taxonomy" id="122586"/>
    <lineage>
        <taxon>Bacteria</taxon>
        <taxon>Pseudomonadati</taxon>
        <taxon>Pseudomonadota</taxon>
        <taxon>Betaproteobacteria</taxon>
        <taxon>Neisseriales</taxon>
        <taxon>Neisseriaceae</taxon>
        <taxon>Neisseria</taxon>
    </lineage>
</organism>
<protein>
    <recommendedName>
        <fullName evidence="1">Bifunctional glutamine synthetase adenylyltransferase/adenylyl-removing enzyme</fullName>
    </recommendedName>
    <alternativeName>
        <fullName evidence="1">ATP:glutamine synthetase adenylyltransferase</fullName>
    </alternativeName>
    <alternativeName>
        <fullName evidence="1">ATase</fullName>
    </alternativeName>
    <domain>
        <recommendedName>
            <fullName evidence="1">Glutamine synthetase adenylyl-L-tyrosine phosphorylase</fullName>
            <ecNumber evidence="1">2.7.7.89</ecNumber>
        </recommendedName>
        <alternativeName>
            <fullName evidence="1">Adenylyl removase</fullName>
            <shortName evidence="1">AR</shortName>
            <shortName evidence="1">AT-N</shortName>
        </alternativeName>
    </domain>
    <domain>
        <recommendedName>
            <fullName evidence="1">Glutamine synthetase adenylyl transferase</fullName>
            <ecNumber evidence="1">2.7.7.42</ecNumber>
        </recommendedName>
        <alternativeName>
            <fullName evidence="1">Adenylyl transferase</fullName>
            <shortName evidence="1">AT</shortName>
            <shortName evidence="1">AT-C</shortName>
        </alternativeName>
    </domain>
</protein>
<sequence>MSDNRLDTARRHSLFLARQLDNGKLKPEIFLPMLDKVLTEADFQAFADWGEIRAEENEEELARQLRELRRYVVSQIIVRDINRISDLNEVTRTITLFADFAVNTALDFAYAYYRDMYGTPIGRYTKSPQHLSVVAMGKAGGYELNVSSDIDLIFVYPESGDTDGRRERGNQEFFTKVGQKLIALLNDITADGQVFRVDMRLRPDGDSGALVLSETALEQYLITQGREWERYAWCKGRVVTPYPNDIKALVRPFVFRKYLDYGAYEAMRKLHRQISSEVSKKGMADNIKLGAGGIREVEFIAQIFQMIRGGQMRALQLKGTQETLKKLAELGIMLSEHVETLLAAYRFLRDVEHRLQYWDDQQTQTLPTSPEQRQLLAESMGFDSYSAFSDGLNVHRNKVNQLFNEILSEPEEQTQDNSEWQWAWQDKPDEEGRRCRLKAHGFDAETVAARLDQIRHGHKYRHLSAHAQPRFDAVVPLFVQAAAAQSNPTDTLMRLLDFLENISRRSAYLAFLNEHPQTLAQLAQIMGQSSWVAAYLNKYPILLDELISAQLLDTAFDWQALAAALSDDLKACGGDTEAQMDTLRRFQHAQVFRLAVQDLAGLWTVESLSDQLSALADTILAAALLCAWADMPKKHRDTPQFAVVGYGKLGGKELGYASDLDLVYLYDDPHPDAGDVYSRLARRLTNWLSAATGAGSLYETDLRLRPNGDAGFLAHSIAAFEKYQRENAWTWEHQSLTRARFICGTSEIQTAFDRIRTEILTAERDQTALAGEIIEMREKMFPTHPPADSNVKYARGGVVDVEFIVQYLILAHARQYPQLLDNYGNIALLNISADCGLIDKTLAGQSRTAYRFYRRQQHNTKLRDAAKTEVTGELLAHYGNVRKLWREVFGEEAATV</sequence>
<evidence type="ECO:0000255" key="1">
    <source>
        <dbReference type="HAMAP-Rule" id="MF_00802"/>
    </source>
</evidence>
<name>GLNE_NEIMB</name>
<keyword id="KW-0067">ATP-binding</keyword>
<keyword id="KW-0460">Magnesium</keyword>
<keyword id="KW-0511">Multifunctional enzyme</keyword>
<keyword id="KW-0547">Nucleotide-binding</keyword>
<keyword id="KW-0548">Nucleotidyltransferase</keyword>
<keyword id="KW-1185">Reference proteome</keyword>
<keyword id="KW-0808">Transferase</keyword>
<comment type="function">
    <text evidence="1">Involved in the regulation of glutamine synthetase GlnA, a key enzyme in the process to assimilate ammonia. When cellular nitrogen levels are high, the C-terminal adenylyl transferase (AT) inactivates GlnA by covalent transfer of an adenylyl group from ATP to specific tyrosine residue of GlnA, thus reducing its activity. Conversely, when nitrogen levels are low, the N-terminal adenylyl removase (AR) activates GlnA by removing the adenylyl group by phosphorolysis, increasing its activity. The regulatory region of GlnE binds the signal transduction protein PII (GlnB) which indicates the nitrogen status of the cell.</text>
</comment>
<comment type="catalytic activity">
    <reaction evidence="1">
        <text>[glutamine synthetase]-O(4)-(5'-adenylyl)-L-tyrosine + phosphate = [glutamine synthetase]-L-tyrosine + ADP</text>
        <dbReference type="Rhea" id="RHEA:43716"/>
        <dbReference type="Rhea" id="RHEA-COMP:10660"/>
        <dbReference type="Rhea" id="RHEA-COMP:10661"/>
        <dbReference type="ChEBI" id="CHEBI:43474"/>
        <dbReference type="ChEBI" id="CHEBI:46858"/>
        <dbReference type="ChEBI" id="CHEBI:83624"/>
        <dbReference type="ChEBI" id="CHEBI:456216"/>
        <dbReference type="EC" id="2.7.7.89"/>
    </reaction>
</comment>
<comment type="catalytic activity">
    <reaction evidence="1">
        <text>[glutamine synthetase]-L-tyrosine + ATP = [glutamine synthetase]-O(4)-(5'-adenylyl)-L-tyrosine + diphosphate</text>
        <dbReference type="Rhea" id="RHEA:18589"/>
        <dbReference type="Rhea" id="RHEA-COMP:10660"/>
        <dbReference type="Rhea" id="RHEA-COMP:10661"/>
        <dbReference type="ChEBI" id="CHEBI:30616"/>
        <dbReference type="ChEBI" id="CHEBI:33019"/>
        <dbReference type="ChEBI" id="CHEBI:46858"/>
        <dbReference type="ChEBI" id="CHEBI:83624"/>
        <dbReference type="EC" id="2.7.7.42"/>
    </reaction>
</comment>
<comment type="cofactor">
    <cofactor evidence="1">
        <name>Mg(2+)</name>
        <dbReference type="ChEBI" id="CHEBI:18420"/>
    </cofactor>
</comment>
<comment type="similarity">
    <text evidence="1">Belongs to the GlnE family.</text>
</comment>
<feature type="chain" id="PRO_0000209259" description="Bifunctional glutamine synthetase adenylyltransferase/adenylyl-removing enzyme">
    <location>
        <begin position="1"/>
        <end position="896"/>
    </location>
</feature>
<feature type="region of interest" description="Adenylyl removase" evidence="1">
    <location>
        <begin position="1"/>
        <end position="411"/>
    </location>
</feature>
<feature type="region of interest" description="Adenylyl transferase" evidence="1">
    <location>
        <begin position="417"/>
        <end position="896"/>
    </location>
</feature>
<dbReference type="EC" id="2.7.7.89" evidence="1"/>
<dbReference type="EC" id="2.7.7.42" evidence="1"/>
<dbReference type="EMBL" id="AE002098">
    <property type="protein sequence ID" value="AAF40680.1"/>
    <property type="molecule type" value="Genomic_DNA"/>
</dbReference>
<dbReference type="PIR" id="B81223">
    <property type="entry name" value="B81223"/>
</dbReference>
<dbReference type="RefSeq" id="NP_273281.1">
    <property type="nucleotide sequence ID" value="NC_003112.2"/>
</dbReference>
<dbReference type="RefSeq" id="WP_002224816.1">
    <property type="nucleotide sequence ID" value="NC_003112.2"/>
</dbReference>
<dbReference type="SMR" id="Q9K1D5"/>
<dbReference type="FunCoup" id="Q9K1D5">
    <property type="interactions" value="201"/>
</dbReference>
<dbReference type="STRING" id="122586.NMB0224"/>
<dbReference type="PaxDb" id="122586-NMB0224"/>
<dbReference type="KEGG" id="nme:NMB0224"/>
<dbReference type="PATRIC" id="fig|122586.8.peg.285"/>
<dbReference type="HOGENOM" id="CLU_006233_0_1_4"/>
<dbReference type="InParanoid" id="Q9K1D5"/>
<dbReference type="OrthoDB" id="9759366at2"/>
<dbReference type="Proteomes" id="UP000000425">
    <property type="component" value="Chromosome"/>
</dbReference>
<dbReference type="GO" id="GO:0005829">
    <property type="term" value="C:cytosol"/>
    <property type="evidence" value="ECO:0000318"/>
    <property type="project" value="GO_Central"/>
</dbReference>
<dbReference type="GO" id="GO:0008882">
    <property type="term" value="F:[glutamate-ammonia-ligase] adenylyltransferase activity"/>
    <property type="evidence" value="ECO:0000318"/>
    <property type="project" value="GO_Central"/>
</dbReference>
<dbReference type="GO" id="GO:0047388">
    <property type="term" value="F:[glutamine synthetase]-adenylyl-L-tyrosine phosphorylase activity"/>
    <property type="evidence" value="ECO:0007669"/>
    <property type="project" value="UniProtKB-EC"/>
</dbReference>
<dbReference type="GO" id="GO:0005524">
    <property type="term" value="F:ATP binding"/>
    <property type="evidence" value="ECO:0007669"/>
    <property type="project" value="UniProtKB-UniRule"/>
</dbReference>
<dbReference type="GO" id="GO:0000287">
    <property type="term" value="F:magnesium ion binding"/>
    <property type="evidence" value="ECO:0007669"/>
    <property type="project" value="UniProtKB-UniRule"/>
</dbReference>
<dbReference type="GO" id="GO:0000820">
    <property type="term" value="P:regulation of glutamine family amino acid metabolic process"/>
    <property type="evidence" value="ECO:0000318"/>
    <property type="project" value="GO_Central"/>
</dbReference>
<dbReference type="CDD" id="cd05401">
    <property type="entry name" value="NT_GlnE_GlnD_like"/>
    <property type="match status" value="2"/>
</dbReference>
<dbReference type="FunFam" id="1.20.120.330:FF:000005">
    <property type="entry name" value="Bifunctional glutamine synthetase adenylyltransferase/adenylyl-removing enzyme"/>
    <property type="match status" value="1"/>
</dbReference>
<dbReference type="FunFam" id="3.30.460.10:FF:000009">
    <property type="entry name" value="Bifunctional glutamine synthetase adenylyltransferase/adenylyl-removing enzyme"/>
    <property type="match status" value="2"/>
</dbReference>
<dbReference type="Gene3D" id="1.20.120.1510">
    <property type="match status" value="1"/>
</dbReference>
<dbReference type="Gene3D" id="3.30.460.10">
    <property type="entry name" value="Beta Polymerase, domain 2"/>
    <property type="match status" value="2"/>
</dbReference>
<dbReference type="Gene3D" id="1.20.120.330">
    <property type="entry name" value="Nucleotidyltransferases domain 2"/>
    <property type="match status" value="2"/>
</dbReference>
<dbReference type="HAMAP" id="MF_00802">
    <property type="entry name" value="GlnE"/>
    <property type="match status" value="1"/>
</dbReference>
<dbReference type="InterPro" id="IPR023057">
    <property type="entry name" value="GlnE"/>
</dbReference>
<dbReference type="InterPro" id="IPR005190">
    <property type="entry name" value="GlnE_rpt_dom"/>
</dbReference>
<dbReference type="InterPro" id="IPR043519">
    <property type="entry name" value="NT_sf"/>
</dbReference>
<dbReference type="InterPro" id="IPR013546">
    <property type="entry name" value="PII_UdlTrfase/GS_AdlTrfase"/>
</dbReference>
<dbReference type="NCBIfam" id="NF008292">
    <property type="entry name" value="PRK11072.1"/>
    <property type="match status" value="1"/>
</dbReference>
<dbReference type="PANTHER" id="PTHR30621:SF0">
    <property type="entry name" value="BIFUNCTIONAL GLUTAMINE SYNTHETASE ADENYLYLTRANSFERASE_ADENYLYL-REMOVING ENZYME"/>
    <property type="match status" value="1"/>
</dbReference>
<dbReference type="PANTHER" id="PTHR30621">
    <property type="entry name" value="GLUTAMINE SYNTHETASE ADENYLYLTRANSFERASE"/>
    <property type="match status" value="1"/>
</dbReference>
<dbReference type="Pfam" id="PF08335">
    <property type="entry name" value="GlnD_UR_UTase"/>
    <property type="match status" value="2"/>
</dbReference>
<dbReference type="Pfam" id="PF03710">
    <property type="entry name" value="GlnE"/>
    <property type="match status" value="2"/>
</dbReference>
<dbReference type="SUPFAM" id="SSF81301">
    <property type="entry name" value="Nucleotidyltransferase"/>
    <property type="match status" value="2"/>
</dbReference>
<dbReference type="SUPFAM" id="SSF81593">
    <property type="entry name" value="Nucleotidyltransferase substrate binding subunit/domain"/>
    <property type="match status" value="2"/>
</dbReference>